<evidence type="ECO:0000255" key="1">
    <source>
        <dbReference type="HAMAP-Rule" id="MF_01147"/>
    </source>
</evidence>
<comment type="function">
    <text evidence="1">Catalyzes the transfer of the diacylglyceryl group from phosphatidylglycerol to the sulfhydryl group of the N-terminal cysteine of a prolipoprotein, the first step in the formation of mature lipoproteins.</text>
</comment>
<comment type="catalytic activity">
    <reaction evidence="1">
        <text>L-cysteinyl-[prolipoprotein] + a 1,2-diacyl-sn-glycero-3-phospho-(1'-sn-glycerol) = an S-1,2-diacyl-sn-glyceryl-L-cysteinyl-[prolipoprotein] + sn-glycerol 1-phosphate + H(+)</text>
        <dbReference type="Rhea" id="RHEA:56712"/>
        <dbReference type="Rhea" id="RHEA-COMP:14679"/>
        <dbReference type="Rhea" id="RHEA-COMP:14680"/>
        <dbReference type="ChEBI" id="CHEBI:15378"/>
        <dbReference type="ChEBI" id="CHEBI:29950"/>
        <dbReference type="ChEBI" id="CHEBI:57685"/>
        <dbReference type="ChEBI" id="CHEBI:64716"/>
        <dbReference type="ChEBI" id="CHEBI:140658"/>
        <dbReference type="EC" id="2.5.1.145"/>
    </reaction>
</comment>
<comment type="pathway">
    <text evidence="1">Protein modification; lipoprotein biosynthesis (diacylglyceryl transfer).</text>
</comment>
<comment type="subcellular location">
    <subcellularLocation>
        <location evidence="1">Cell inner membrane</location>
        <topology evidence="1">Multi-pass membrane protein</topology>
    </subcellularLocation>
</comment>
<comment type="similarity">
    <text evidence="1">Belongs to the Lgt family.</text>
</comment>
<sequence length="302" mass="33619">MIFPNIDPIVHIGPWALQWGPLALRWYALAYVVGILLGWRYAVMLVRDAKLWGGHKPTATPLQIDDLVLWITLGIILGGRIGYVLFYMMLNEGQRAGLAEHPFDVFKIWEGGMSFHGGFLGVCAAIVLFARQQKIDMLKLGDLIAPVAPIGLFFGRCANFINGELWGRETTHPWGMIFCNETIQKANQGGCPAGHLPRHPSQLYEAALEGVLLFLILNFAAHKLKWLQRRGALVATFLICYGLFRVSLEGVRNPDHGMPNFPLGLTMGMILSIPMLAVGVWLLWRALREPVPPPLAEDHEPA</sequence>
<name>LGT_CAUSK</name>
<keyword id="KW-0997">Cell inner membrane</keyword>
<keyword id="KW-1003">Cell membrane</keyword>
<keyword id="KW-0472">Membrane</keyword>
<keyword id="KW-0808">Transferase</keyword>
<keyword id="KW-0812">Transmembrane</keyword>
<keyword id="KW-1133">Transmembrane helix</keyword>
<reference key="1">
    <citation type="submission" date="2008-01" db="EMBL/GenBank/DDBJ databases">
        <title>Complete sequence of chromosome of Caulobacter sp. K31.</title>
        <authorList>
            <consortium name="US DOE Joint Genome Institute"/>
            <person name="Copeland A."/>
            <person name="Lucas S."/>
            <person name="Lapidus A."/>
            <person name="Barry K."/>
            <person name="Glavina del Rio T."/>
            <person name="Dalin E."/>
            <person name="Tice H."/>
            <person name="Pitluck S."/>
            <person name="Bruce D."/>
            <person name="Goodwin L."/>
            <person name="Thompson L.S."/>
            <person name="Brettin T."/>
            <person name="Detter J.C."/>
            <person name="Han C."/>
            <person name="Schmutz J."/>
            <person name="Larimer F."/>
            <person name="Land M."/>
            <person name="Hauser L."/>
            <person name="Kyrpides N."/>
            <person name="Kim E."/>
            <person name="Stephens C."/>
            <person name="Richardson P."/>
        </authorList>
    </citation>
    <scope>NUCLEOTIDE SEQUENCE [LARGE SCALE GENOMIC DNA]</scope>
    <source>
        <strain>K31</strain>
    </source>
</reference>
<proteinExistence type="inferred from homology"/>
<accession>B0T8A6</accession>
<dbReference type="EC" id="2.5.1.145" evidence="1"/>
<dbReference type="EMBL" id="CP000927">
    <property type="protein sequence ID" value="ABZ69807.1"/>
    <property type="molecule type" value="Genomic_DNA"/>
</dbReference>
<dbReference type="SMR" id="B0T8A6"/>
<dbReference type="STRING" id="366602.Caul_0674"/>
<dbReference type="KEGG" id="cak:Caul_0674"/>
<dbReference type="eggNOG" id="COG0682">
    <property type="taxonomic scope" value="Bacteria"/>
</dbReference>
<dbReference type="HOGENOM" id="CLU_013386_1_0_5"/>
<dbReference type="OrthoDB" id="871140at2"/>
<dbReference type="UniPathway" id="UPA00664"/>
<dbReference type="GO" id="GO:0005886">
    <property type="term" value="C:plasma membrane"/>
    <property type="evidence" value="ECO:0007669"/>
    <property type="project" value="UniProtKB-SubCell"/>
</dbReference>
<dbReference type="GO" id="GO:0008961">
    <property type="term" value="F:phosphatidylglycerol-prolipoprotein diacylglyceryl transferase activity"/>
    <property type="evidence" value="ECO:0007669"/>
    <property type="project" value="UniProtKB-UniRule"/>
</dbReference>
<dbReference type="GO" id="GO:0042158">
    <property type="term" value="P:lipoprotein biosynthetic process"/>
    <property type="evidence" value="ECO:0007669"/>
    <property type="project" value="UniProtKB-UniRule"/>
</dbReference>
<dbReference type="HAMAP" id="MF_01147">
    <property type="entry name" value="Lgt"/>
    <property type="match status" value="1"/>
</dbReference>
<dbReference type="InterPro" id="IPR001640">
    <property type="entry name" value="Lgt"/>
</dbReference>
<dbReference type="NCBIfam" id="TIGR00544">
    <property type="entry name" value="lgt"/>
    <property type="match status" value="1"/>
</dbReference>
<dbReference type="PANTHER" id="PTHR30589:SF0">
    <property type="entry name" value="PHOSPHATIDYLGLYCEROL--PROLIPOPROTEIN DIACYLGLYCERYL TRANSFERASE"/>
    <property type="match status" value="1"/>
</dbReference>
<dbReference type="PANTHER" id="PTHR30589">
    <property type="entry name" value="PROLIPOPROTEIN DIACYLGLYCERYL TRANSFERASE"/>
    <property type="match status" value="1"/>
</dbReference>
<dbReference type="Pfam" id="PF01790">
    <property type="entry name" value="LGT"/>
    <property type="match status" value="1"/>
</dbReference>
<dbReference type="PROSITE" id="PS01311">
    <property type="entry name" value="LGT"/>
    <property type="match status" value="1"/>
</dbReference>
<feature type="chain" id="PRO_1000164132" description="Phosphatidylglycerol--prolipoprotein diacylglyceryl transferase">
    <location>
        <begin position="1"/>
        <end position="302"/>
    </location>
</feature>
<feature type="transmembrane region" description="Helical" evidence="1">
    <location>
        <begin position="26"/>
        <end position="46"/>
    </location>
</feature>
<feature type="transmembrane region" description="Helical" evidence="1">
    <location>
        <begin position="67"/>
        <end position="87"/>
    </location>
</feature>
<feature type="transmembrane region" description="Helical" evidence="1">
    <location>
        <begin position="108"/>
        <end position="128"/>
    </location>
</feature>
<feature type="transmembrane region" description="Helical" evidence="1">
    <location>
        <begin position="231"/>
        <end position="251"/>
    </location>
</feature>
<feature type="transmembrane region" description="Helical" evidence="1">
    <location>
        <begin position="263"/>
        <end position="283"/>
    </location>
</feature>
<feature type="binding site" evidence="1">
    <location>
        <position position="156"/>
    </location>
    <ligand>
        <name>a 1,2-diacyl-sn-glycero-3-phospho-(1'-sn-glycerol)</name>
        <dbReference type="ChEBI" id="CHEBI:64716"/>
    </ligand>
</feature>
<organism>
    <name type="scientific">Caulobacter sp. (strain K31)</name>
    <dbReference type="NCBI Taxonomy" id="366602"/>
    <lineage>
        <taxon>Bacteria</taxon>
        <taxon>Pseudomonadati</taxon>
        <taxon>Pseudomonadota</taxon>
        <taxon>Alphaproteobacteria</taxon>
        <taxon>Caulobacterales</taxon>
        <taxon>Caulobacteraceae</taxon>
        <taxon>Caulobacter</taxon>
    </lineage>
</organism>
<gene>
    <name evidence="1" type="primary">lgt</name>
    <name type="ordered locus">Caul_0674</name>
</gene>
<protein>
    <recommendedName>
        <fullName evidence="1">Phosphatidylglycerol--prolipoprotein diacylglyceryl transferase</fullName>
        <ecNumber evidence="1">2.5.1.145</ecNumber>
    </recommendedName>
</protein>